<name>SYW_THEVO</name>
<evidence type="ECO:0000255" key="1">
    <source>
        <dbReference type="HAMAP-Rule" id="MF_00140"/>
    </source>
</evidence>
<protein>
    <recommendedName>
        <fullName evidence="1">Tryptophan--tRNA ligase</fullName>
        <ecNumber evidence="1">6.1.1.2</ecNumber>
    </recommendedName>
    <alternativeName>
        <fullName evidence="1">Tryptophanyl-tRNA synthetase</fullName>
        <shortName evidence="1">TrpRS</shortName>
    </alternativeName>
</protein>
<sequence length="426" mass="48768">MINPWSSSDFFDYERLKKEFGISDQSDNIDHFLFRRKVILGQRGFEYIKYAIDNKIKFNVMTGLMPSGEMHLGNKSAIDQVIYFQKLGGSVSIAVADLESYSTRGIPLDKAREIAIEKYILNYIAMGLQPCEIYFQSKNKDVQFLSYILGNWTNMNELKALYGFTDSNDILHINAPLIQAADVLHTQLNNYGGPAPTVVPVGFDQDPHIRLMRDLAKRMRIFNVFYDGGITVSIKGKGDSTMPVDQAYEYLSKRFSEVTKDYEYRVVKAKDGKEEDIVRTDIDLAKIGSEFNVFSFIPPSATYQKLMKGLKGGKMSSSVPDSLISMNDDVEEAKRKIMRALTGGRDTEEEQRKLGGEPEKCPVFDLYNYEIDDDKYVNEVFEECKSGKRMCGYCKREIADKMSIFLKDIKEKREIAREKLSLYIHE</sequence>
<dbReference type="EC" id="6.1.1.2" evidence="1"/>
<dbReference type="EMBL" id="BA000011">
    <property type="protein sequence ID" value="BAB60418.1"/>
    <property type="molecule type" value="Genomic_DNA"/>
</dbReference>
<dbReference type="RefSeq" id="WP_010917511.1">
    <property type="nucleotide sequence ID" value="NC_002689.2"/>
</dbReference>
<dbReference type="SMR" id="Q978Y8"/>
<dbReference type="STRING" id="273116.gene:9382082"/>
<dbReference type="PaxDb" id="273116-14325515"/>
<dbReference type="GeneID" id="1441393"/>
<dbReference type="KEGG" id="tvo:TVG1316213"/>
<dbReference type="eggNOG" id="arCOG01887">
    <property type="taxonomic scope" value="Archaea"/>
</dbReference>
<dbReference type="HOGENOM" id="CLU_032621_3_0_2"/>
<dbReference type="OrthoDB" id="371821at2157"/>
<dbReference type="PhylomeDB" id="Q978Y8"/>
<dbReference type="Proteomes" id="UP000001017">
    <property type="component" value="Chromosome"/>
</dbReference>
<dbReference type="GO" id="GO:0005737">
    <property type="term" value="C:cytoplasm"/>
    <property type="evidence" value="ECO:0007669"/>
    <property type="project" value="UniProtKB-SubCell"/>
</dbReference>
<dbReference type="GO" id="GO:0005524">
    <property type="term" value="F:ATP binding"/>
    <property type="evidence" value="ECO:0007669"/>
    <property type="project" value="UniProtKB-UniRule"/>
</dbReference>
<dbReference type="GO" id="GO:0004830">
    <property type="term" value="F:tryptophan-tRNA ligase activity"/>
    <property type="evidence" value="ECO:0007669"/>
    <property type="project" value="UniProtKB-UniRule"/>
</dbReference>
<dbReference type="GO" id="GO:0006436">
    <property type="term" value="P:tryptophanyl-tRNA aminoacylation"/>
    <property type="evidence" value="ECO:0007669"/>
    <property type="project" value="UniProtKB-UniRule"/>
</dbReference>
<dbReference type="Gene3D" id="3.40.50.620">
    <property type="entry name" value="HUPs"/>
    <property type="match status" value="1"/>
</dbReference>
<dbReference type="Gene3D" id="1.10.240.10">
    <property type="entry name" value="Tyrosyl-Transfer RNA Synthetase"/>
    <property type="match status" value="1"/>
</dbReference>
<dbReference type="HAMAP" id="MF_00140_A">
    <property type="entry name" value="Trp_tRNA_synth_A"/>
    <property type="match status" value="1"/>
</dbReference>
<dbReference type="InterPro" id="IPR002305">
    <property type="entry name" value="aa-tRNA-synth_Ic"/>
</dbReference>
<dbReference type="InterPro" id="IPR014729">
    <property type="entry name" value="Rossmann-like_a/b/a_fold"/>
</dbReference>
<dbReference type="InterPro" id="IPR002306">
    <property type="entry name" value="Trp-tRNA-ligase"/>
</dbReference>
<dbReference type="InterPro" id="IPR020653">
    <property type="entry name" value="Tryptophan-tRNA-ligase_arc"/>
</dbReference>
<dbReference type="NCBIfam" id="NF008926">
    <property type="entry name" value="PRK12285.1-3"/>
    <property type="match status" value="1"/>
</dbReference>
<dbReference type="PANTHER" id="PTHR10055:SF5">
    <property type="entry name" value="TRYPTOPHAN--TRNA LIGASE"/>
    <property type="match status" value="1"/>
</dbReference>
<dbReference type="PANTHER" id="PTHR10055">
    <property type="entry name" value="TRYPTOPHANYL-TRNA SYNTHETASE"/>
    <property type="match status" value="1"/>
</dbReference>
<dbReference type="Pfam" id="PF00579">
    <property type="entry name" value="tRNA-synt_1b"/>
    <property type="match status" value="2"/>
</dbReference>
<dbReference type="PRINTS" id="PR01039">
    <property type="entry name" value="TRNASYNTHTRP"/>
</dbReference>
<dbReference type="SUPFAM" id="SSF52374">
    <property type="entry name" value="Nucleotidylyl transferase"/>
    <property type="match status" value="1"/>
</dbReference>
<accession>Q978Y8</accession>
<feature type="chain" id="PRO_0000136736" description="Tryptophan--tRNA ligase">
    <location>
        <begin position="1"/>
        <end position="426"/>
    </location>
</feature>
<feature type="short sequence motif" description="'HIGH' region">
    <location>
        <begin position="66"/>
        <end position="74"/>
    </location>
</feature>
<feature type="short sequence motif" description="'KMSKS' region">
    <location>
        <begin position="314"/>
        <end position="318"/>
    </location>
</feature>
<keyword id="KW-0030">Aminoacyl-tRNA synthetase</keyword>
<keyword id="KW-0067">ATP-binding</keyword>
<keyword id="KW-0963">Cytoplasm</keyword>
<keyword id="KW-0436">Ligase</keyword>
<keyword id="KW-0547">Nucleotide-binding</keyword>
<keyword id="KW-0648">Protein biosynthesis</keyword>
<reference key="1">
    <citation type="journal article" date="2000" name="Proc. Natl. Acad. Sci. U.S.A.">
        <title>Archaeal adaptation to higher temperatures revealed by genomic sequence of Thermoplasma volcanium.</title>
        <authorList>
            <person name="Kawashima T."/>
            <person name="Amano N."/>
            <person name="Koike H."/>
            <person name="Makino S."/>
            <person name="Higuchi S."/>
            <person name="Kawashima-Ohya Y."/>
            <person name="Watanabe K."/>
            <person name="Yamazaki M."/>
            <person name="Kanehori K."/>
            <person name="Kawamoto T."/>
            <person name="Nunoshiba T."/>
            <person name="Yamamoto Y."/>
            <person name="Aramaki H."/>
            <person name="Makino K."/>
            <person name="Suzuki M."/>
        </authorList>
    </citation>
    <scope>NUCLEOTIDE SEQUENCE [LARGE SCALE GENOMIC DNA]</scope>
    <source>
        <strain>ATCC 51530 / DSM 4299 / JCM 9571 / NBRC 15438 / GSS1</strain>
    </source>
</reference>
<proteinExistence type="inferred from homology"/>
<organism>
    <name type="scientific">Thermoplasma volcanium (strain ATCC 51530 / DSM 4299 / JCM 9571 / NBRC 15438 / GSS1)</name>
    <dbReference type="NCBI Taxonomy" id="273116"/>
    <lineage>
        <taxon>Archaea</taxon>
        <taxon>Methanobacteriati</taxon>
        <taxon>Thermoplasmatota</taxon>
        <taxon>Thermoplasmata</taxon>
        <taxon>Thermoplasmatales</taxon>
        <taxon>Thermoplasmataceae</taxon>
        <taxon>Thermoplasma</taxon>
    </lineage>
</organism>
<gene>
    <name evidence="1" type="primary">trpS</name>
    <name type="ordered locus">TV1276</name>
    <name type="ORF">TVG1316213</name>
</gene>
<comment type="catalytic activity">
    <reaction evidence="1">
        <text>tRNA(Trp) + L-tryptophan + ATP = L-tryptophyl-tRNA(Trp) + AMP + diphosphate + H(+)</text>
        <dbReference type="Rhea" id="RHEA:24080"/>
        <dbReference type="Rhea" id="RHEA-COMP:9671"/>
        <dbReference type="Rhea" id="RHEA-COMP:9705"/>
        <dbReference type="ChEBI" id="CHEBI:15378"/>
        <dbReference type="ChEBI" id="CHEBI:30616"/>
        <dbReference type="ChEBI" id="CHEBI:33019"/>
        <dbReference type="ChEBI" id="CHEBI:57912"/>
        <dbReference type="ChEBI" id="CHEBI:78442"/>
        <dbReference type="ChEBI" id="CHEBI:78535"/>
        <dbReference type="ChEBI" id="CHEBI:456215"/>
        <dbReference type="EC" id="6.1.1.2"/>
    </reaction>
</comment>
<comment type="subcellular location">
    <subcellularLocation>
        <location evidence="1">Cytoplasm</location>
    </subcellularLocation>
</comment>
<comment type="similarity">
    <text evidence="1">Belongs to the class-I aminoacyl-tRNA synthetase family.</text>
</comment>